<gene>
    <name evidence="1" type="primary">dxs</name>
    <name type="ordered locus">BTH_II0614</name>
</gene>
<dbReference type="EC" id="2.2.1.7" evidence="1"/>
<dbReference type="EMBL" id="CP000085">
    <property type="protein sequence ID" value="ABC35865.1"/>
    <property type="molecule type" value="Genomic_DNA"/>
</dbReference>
<dbReference type="RefSeq" id="WP_009895737.1">
    <property type="nucleotide sequence ID" value="NZ_CP008786.1"/>
</dbReference>
<dbReference type="SMR" id="Q2T7N5"/>
<dbReference type="GeneID" id="45118105"/>
<dbReference type="KEGG" id="bte:BTH_II0614"/>
<dbReference type="HOGENOM" id="CLU_009227_1_4_4"/>
<dbReference type="UniPathway" id="UPA00064">
    <property type="reaction ID" value="UER00091"/>
</dbReference>
<dbReference type="Proteomes" id="UP000001930">
    <property type="component" value="Chromosome II"/>
</dbReference>
<dbReference type="GO" id="GO:0005829">
    <property type="term" value="C:cytosol"/>
    <property type="evidence" value="ECO:0007669"/>
    <property type="project" value="TreeGrafter"/>
</dbReference>
<dbReference type="GO" id="GO:0008661">
    <property type="term" value="F:1-deoxy-D-xylulose-5-phosphate synthase activity"/>
    <property type="evidence" value="ECO:0007669"/>
    <property type="project" value="UniProtKB-UniRule"/>
</dbReference>
<dbReference type="GO" id="GO:0000287">
    <property type="term" value="F:magnesium ion binding"/>
    <property type="evidence" value="ECO:0007669"/>
    <property type="project" value="UniProtKB-UniRule"/>
</dbReference>
<dbReference type="GO" id="GO:0030976">
    <property type="term" value="F:thiamine pyrophosphate binding"/>
    <property type="evidence" value="ECO:0007669"/>
    <property type="project" value="UniProtKB-UniRule"/>
</dbReference>
<dbReference type="GO" id="GO:0052865">
    <property type="term" value="P:1-deoxy-D-xylulose 5-phosphate biosynthetic process"/>
    <property type="evidence" value="ECO:0007669"/>
    <property type="project" value="UniProtKB-UniPathway"/>
</dbReference>
<dbReference type="GO" id="GO:0019288">
    <property type="term" value="P:isopentenyl diphosphate biosynthetic process, methylerythritol 4-phosphate pathway"/>
    <property type="evidence" value="ECO:0007669"/>
    <property type="project" value="TreeGrafter"/>
</dbReference>
<dbReference type="GO" id="GO:0016114">
    <property type="term" value="P:terpenoid biosynthetic process"/>
    <property type="evidence" value="ECO:0007669"/>
    <property type="project" value="UniProtKB-UniRule"/>
</dbReference>
<dbReference type="GO" id="GO:0009228">
    <property type="term" value="P:thiamine biosynthetic process"/>
    <property type="evidence" value="ECO:0007669"/>
    <property type="project" value="UniProtKB-UniRule"/>
</dbReference>
<dbReference type="CDD" id="cd02007">
    <property type="entry name" value="TPP_DXS"/>
    <property type="match status" value="1"/>
</dbReference>
<dbReference type="CDD" id="cd07033">
    <property type="entry name" value="TPP_PYR_DXS_TK_like"/>
    <property type="match status" value="1"/>
</dbReference>
<dbReference type="FunFam" id="3.40.50.920:FF:000002">
    <property type="entry name" value="1-deoxy-D-xylulose-5-phosphate synthase"/>
    <property type="match status" value="1"/>
</dbReference>
<dbReference type="FunFam" id="3.40.50.970:FF:000005">
    <property type="entry name" value="1-deoxy-D-xylulose-5-phosphate synthase"/>
    <property type="match status" value="1"/>
</dbReference>
<dbReference type="Gene3D" id="3.40.50.920">
    <property type="match status" value="1"/>
</dbReference>
<dbReference type="Gene3D" id="3.40.50.970">
    <property type="match status" value="2"/>
</dbReference>
<dbReference type="HAMAP" id="MF_00315">
    <property type="entry name" value="DXP_synth"/>
    <property type="match status" value="1"/>
</dbReference>
<dbReference type="InterPro" id="IPR005477">
    <property type="entry name" value="Dxylulose-5-P_synthase"/>
</dbReference>
<dbReference type="InterPro" id="IPR029061">
    <property type="entry name" value="THDP-binding"/>
</dbReference>
<dbReference type="InterPro" id="IPR009014">
    <property type="entry name" value="Transketo_C/PFOR_II"/>
</dbReference>
<dbReference type="InterPro" id="IPR005475">
    <property type="entry name" value="Transketolase-like_Pyr-bd"/>
</dbReference>
<dbReference type="InterPro" id="IPR020826">
    <property type="entry name" value="Transketolase_BS"/>
</dbReference>
<dbReference type="InterPro" id="IPR033248">
    <property type="entry name" value="Transketolase_C"/>
</dbReference>
<dbReference type="InterPro" id="IPR049557">
    <property type="entry name" value="Transketolase_CS"/>
</dbReference>
<dbReference type="NCBIfam" id="TIGR00204">
    <property type="entry name" value="dxs"/>
    <property type="match status" value="1"/>
</dbReference>
<dbReference type="NCBIfam" id="NF003933">
    <property type="entry name" value="PRK05444.2-2"/>
    <property type="match status" value="1"/>
</dbReference>
<dbReference type="PANTHER" id="PTHR43322">
    <property type="entry name" value="1-D-DEOXYXYLULOSE 5-PHOSPHATE SYNTHASE-RELATED"/>
    <property type="match status" value="1"/>
</dbReference>
<dbReference type="PANTHER" id="PTHR43322:SF5">
    <property type="entry name" value="1-DEOXY-D-XYLULOSE-5-PHOSPHATE SYNTHASE, CHLOROPLASTIC"/>
    <property type="match status" value="1"/>
</dbReference>
<dbReference type="Pfam" id="PF13292">
    <property type="entry name" value="DXP_synthase_N"/>
    <property type="match status" value="1"/>
</dbReference>
<dbReference type="Pfam" id="PF02779">
    <property type="entry name" value="Transket_pyr"/>
    <property type="match status" value="1"/>
</dbReference>
<dbReference type="Pfam" id="PF02780">
    <property type="entry name" value="Transketolase_C"/>
    <property type="match status" value="1"/>
</dbReference>
<dbReference type="SMART" id="SM00861">
    <property type="entry name" value="Transket_pyr"/>
    <property type="match status" value="1"/>
</dbReference>
<dbReference type="SUPFAM" id="SSF52518">
    <property type="entry name" value="Thiamin diphosphate-binding fold (THDP-binding)"/>
    <property type="match status" value="2"/>
</dbReference>
<dbReference type="SUPFAM" id="SSF52922">
    <property type="entry name" value="TK C-terminal domain-like"/>
    <property type="match status" value="1"/>
</dbReference>
<dbReference type="PROSITE" id="PS00801">
    <property type="entry name" value="TRANSKETOLASE_1"/>
    <property type="match status" value="1"/>
</dbReference>
<dbReference type="PROSITE" id="PS00802">
    <property type="entry name" value="TRANSKETOLASE_2"/>
    <property type="match status" value="1"/>
</dbReference>
<name>DXS_BURTA</name>
<proteinExistence type="inferred from homology"/>
<evidence type="ECO:0000255" key="1">
    <source>
        <dbReference type="HAMAP-Rule" id="MF_00315"/>
    </source>
</evidence>
<feature type="chain" id="PRO_0000256392" description="1-deoxy-D-xylulose-5-phosphate synthase">
    <location>
        <begin position="1"/>
        <end position="634"/>
    </location>
</feature>
<feature type="binding site" evidence="1">
    <location>
        <position position="74"/>
    </location>
    <ligand>
        <name>thiamine diphosphate</name>
        <dbReference type="ChEBI" id="CHEBI:58937"/>
    </ligand>
</feature>
<feature type="binding site" evidence="1">
    <location>
        <begin position="115"/>
        <end position="117"/>
    </location>
    <ligand>
        <name>thiamine diphosphate</name>
        <dbReference type="ChEBI" id="CHEBI:58937"/>
    </ligand>
</feature>
<feature type="binding site" evidence="1">
    <location>
        <position position="146"/>
    </location>
    <ligand>
        <name>Mg(2+)</name>
        <dbReference type="ChEBI" id="CHEBI:18420"/>
    </ligand>
</feature>
<feature type="binding site" evidence="1">
    <location>
        <begin position="147"/>
        <end position="148"/>
    </location>
    <ligand>
        <name>thiamine diphosphate</name>
        <dbReference type="ChEBI" id="CHEBI:58937"/>
    </ligand>
</feature>
<feature type="binding site" evidence="1">
    <location>
        <position position="176"/>
    </location>
    <ligand>
        <name>Mg(2+)</name>
        <dbReference type="ChEBI" id="CHEBI:18420"/>
    </ligand>
</feature>
<feature type="binding site" evidence="1">
    <location>
        <position position="176"/>
    </location>
    <ligand>
        <name>thiamine diphosphate</name>
        <dbReference type="ChEBI" id="CHEBI:58937"/>
    </ligand>
</feature>
<feature type="binding site" evidence="1">
    <location>
        <position position="283"/>
    </location>
    <ligand>
        <name>thiamine diphosphate</name>
        <dbReference type="ChEBI" id="CHEBI:58937"/>
    </ligand>
</feature>
<feature type="binding site" evidence="1">
    <location>
        <position position="365"/>
    </location>
    <ligand>
        <name>thiamine diphosphate</name>
        <dbReference type="ChEBI" id="CHEBI:58937"/>
    </ligand>
</feature>
<accession>Q2T7N5</accession>
<sequence length="634" mass="68293">MYDLLKTIDDPADLRRLDRRQLQPLADELRAFVLDSVSKTGGHLSSNLGTVELTIALHYVFNTPDDRIVWDVGHQTYPHKILTGRRDGMKTLRQFDGISGFPRRSESEYDTFGTAHSSTSISAALGMAIGSKLNGDDRFSIAVIGDGAMTAGMAFEAMNNAGVSEDAKLLVILNDNDMSISPPVGALNRHLARLMSGRFYAAARAGVERVLSVAPPVLELARKLEEHAKGMVVPATLFEEFGFNYIGPIDGHDLDSLIPTLQNIKELRGPQFLHVVTKKGQGYKLAEADPVLYHGPGKFNPAEGIKPSATPAKKTYTQVFGEWLCDAAELDARVVGITPAMREGSGMVEFEKRFPERYYDVGIAEQHAVTFAGGLATEGLKPVVAIYSTFLQRAYDQLIHDVALQNLPVVFAIDRAGLVGADGATHAGAYDLAFLRCIPNMTVMAASDENECRQMLHTALQQPNPTAVRYPRGAGTGVATVKAFTEIPLGKGEVRRRTSQPDGKRVAILAFGTMVAPSLAAADALDATVANMRFVKPIDAELVRELAQTHDYLVTVEEGCVMGGAGSACVEAMMEGGAVRPVLQLGLPDRFVDHGDPAKLLAMCGLDGDGIAKSIRERFLNHAANVASPAKRVA</sequence>
<organism>
    <name type="scientific">Burkholderia thailandensis (strain ATCC 700388 / DSM 13276 / CCUG 48851 / CIP 106301 / E264)</name>
    <dbReference type="NCBI Taxonomy" id="271848"/>
    <lineage>
        <taxon>Bacteria</taxon>
        <taxon>Pseudomonadati</taxon>
        <taxon>Pseudomonadota</taxon>
        <taxon>Betaproteobacteria</taxon>
        <taxon>Burkholderiales</taxon>
        <taxon>Burkholderiaceae</taxon>
        <taxon>Burkholderia</taxon>
        <taxon>pseudomallei group</taxon>
    </lineage>
</organism>
<reference key="1">
    <citation type="journal article" date="2005" name="BMC Genomics">
        <title>Bacterial genome adaptation to niches: divergence of the potential virulence genes in three Burkholderia species of different survival strategies.</title>
        <authorList>
            <person name="Kim H.S."/>
            <person name="Schell M.A."/>
            <person name="Yu Y."/>
            <person name="Ulrich R.L."/>
            <person name="Sarria S.H."/>
            <person name="Nierman W.C."/>
            <person name="DeShazer D."/>
        </authorList>
    </citation>
    <scope>NUCLEOTIDE SEQUENCE [LARGE SCALE GENOMIC DNA]</scope>
    <source>
        <strain>ATCC 700388 / DSM 13276 / CCUG 48851 / CIP 106301 / E264</strain>
    </source>
</reference>
<comment type="function">
    <text evidence="1">Catalyzes the acyloin condensation reaction between C atoms 2 and 3 of pyruvate and glyceraldehyde 3-phosphate to yield 1-deoxy-D-xylulose-5-phosphate (DXP).</text>
</comment>
<comment type="catalytic activity">
    <reaction evidence="1">
        <text>D-glyceraldehyde 3-phosphate + pyruvate + H(+) = 1-deoxy-D-xylulose 5-phosphate + CO2</text>
        <dbReference type="Rhea" id="RHEA:12605"/>
        <dbReference type="ChEBI" id="CHEBI:15361"/>
        <dbReference type="ChEBI" id="CHEBI:15378"/>
        <dbReference type="ChEBI" id="CHEBI:16526"/>
        <dbReference type="ChEBI" id="CHEBI:57792"/>
        <dbReference type="ChEBI" id="CHEBI:59776"/>
        <dbReference type="EC" id="2.2.1.7"/>
    </reaction>
</comment>
<comment type="cofactor">
    <cofactor evidence="1">
        <name>Mg(2+)</name>
        <dbReference type="ChEBI" id="CHEBI:18420"/>
    </cofactor>
    <text evidence="1">Binds 1 Mg(2+) ion per subunit.</text>
</comment>
<comment type="cofactor">
    <cofactor evidence="1">
        <name>thiamine diphosphate</name>
        <dbReference type="ChEBI" id="CHEBI:58937"/>
    </cofactor>
    <text evidence="1">Binds 1 thiamine pyrophosphate per subunit.</text>
</comment>
<comment type="pathway">
    <text evidence="1">Metabolic intermediate biosynthesis; 1-deoxy-D-xylulose 5-phosphate biosynthesis; 1-deoxy-D-xylulose 5-phosphate from D-glyceraldehyde 3-phosphate and pyruvate: step 1/1.</text>
</comment>
<comment type="subunit">
    <text evidence="1">Homodimer.</text>
</comment>
<comment type="similarity">
    <text evidence="1">Belongs to the transketolase family. DXPS subfamily.</text>
</comment>
<keyword id="KW-0414">Isoprene biosynthesis</keyword>
<keyword id="KW-0460">Magnesium</keyword>
<keyword id="KW-0479">Metal-binding</keyword>
<keyword id="KW-0784">Thiamine biosynthesis</keyword>
<keyword id="KW-0786">Thiamine pyrophosphate</keyword>
<keyword id="KW-0808">Transferase</keyword>
<protein>
    <recommendedName>
        <fullName evidence="1">1-deoxy-D-xylulose-5-phosphate synthase</fullName>
        <ecNumber evidence="1">2.2.1.7</ecNumber>
    </recommendedName>
    <alternativeName>
        <fullName evidence="1">1-deoxyxylulose-5-phosphate synthase</fullName>
        <shortName evidence="1">DXP synthase</shortName>
        <shortName evidence="1">DXPS</shortName>
    </alternativeName>
</protein>